<comment type="function">
    <text evidence="2">It has antimicrobial activity against Gram-positive bacteria (A.globiformis VKM Ac-1112 (MIC=0.7 uM), and B.subtilis VKM B-501 (MIC=2.9 uM)), Gram-negative bacteria (E.coli DH5-alpha (MIC=23 uM), E.coli MH1 (MIC=28 uM), and P.aeruginosa PAO1 (MIC&gt;45 uM)), and yeasts (P.pastoris GS115 (MIC=23 uM), and S.cerevisiae Y190 (MIC=23 uM)). Does not have hemolytic against rabbit erythrocytes. Causes paralysis, but is not lethal when injected into insect (M.domestica) larvae.</text>
</comment>
<comment type="subcellular location">
    <subcellularLocation>
        <location evidence="2 3">Secreted</location>
    </subcellularLocation>
</comment>
<comment type="tissue specificity">
    <text evidence="7 8">Expressed by the venom gland.</text>
</comment>
<comment type="domain">
    <text evidence="4">The mature peptide (62-81) probably forms alpha-helices which disrupt target cell membranes.</text>
</comment>
<comment type="PTM">
    <text evidence="5">Cleavage of the propeptide depends on the processing quadruplet motif (XXXR, with at least one of X being E).</text>
</comment>
<comment type="mass spectrometry" mass="2424.6" method="MALDI" evidence="2"/>
<comment type="mass spectrometry" mass="2426.0" method="MALDI" evidence="3"/>
<comment type="similarity">
    <text evidence="6">Belongs to the cationic peptide 03 (latarcin) family. 03 subfamily.</text>
</comment>
<organism>
    <name type="scientific">Lachesana tarabaevi</name>
    <name type="common">Spider</name>
    <dbReference type="NCBI Taxonomy" id="379576"/>
    <lineage>
        <taxon>Eukaryota</taxon>
        <taxon>Metazoa</taxon>
        <taxon>Ecdysozoa</taxon>
        <taxon>Arthropoda</taxon>
        <taxon>Chelicerata</taxon>
        <taxon>Arachnida</taxon>
        <taxon>Araneae</taxon>
        <taxon>Araneomorphae</taxon>
        <taxon>Entelegynae</taxon>
        <taxon>Entelegynae incertae sedis</taxon>
        <taxon>Zodariidae</taxon>
        <taxon>Lachesana</taxon>
    </lineage>
</organism>
<protein>
    <recommendedName>
        <fullName evidence="6">M-zodatoxin-Lt3b</fullName>
        <shortName evidence="6">M-ZDTX-Lt3b</shortName>
    </recommendedName>
    <alternativeName>
        <fullName evidence="4">Latarcin-3b</fullName>
        <shortName evidence="4">Ltc-3b</shortName>
    </alternativeName>
</protein>
<proteinExistence type="evidence at protein level"/>
<feature type="signal peptide" evidence="1">
    <location>
        <begin position="1"/>
        <end position="22"/>
    </location>
</feature>
<feature type="propeptide" id="PRO_0000249742" evidence="2">
    <location>
        <begin position="23"/>
        <end position="61"/>
    </location>
</feature>
<feature type="peptide" id="PRO_0000249743" description="M-zodatoxin-Lt3b">
    <location>
        <begin position="62"/>
        <end position="81"/>
    </location>
</feature>
<feature type="short sequence motif" description="Processing quadruplet motif" evidence="5">
    <location>
        <begin position="58"/>
        <end position="61"/>
    </location>
</feature>
<feature type="modified residue" description="Alanine amide" evidence="2 3">
    <location>
        <position position="81"/>
    </location>
</feature>
<evidence type="ECO:0000255" key="1"/>
<evidence type="ECO:0000269" key="2">
    <source>
    </source>
</evidence>
<evidence type="ECO:0000269" key="3">
    <source>
    </source>
</evidence>
<evidence type="ECO:0000303" key="4">
    <source>
    </source>
</evidence>
<evidence type="ECO:0000303" key="5">
    <source>
    </source>
</evidence>
<evidence type="ECO:0000305" key="6"/>
<evidence type="ECO:0000305" key="7">
    <source>
    </source>
</evidence>
<evidence type="ECO:0000305" key="8">
    <source>
    </source>
</evidence>
<name>LAT3B_LACTA</name>
<dbReference type="EMBL" id="AM232697">
    <property type="protein sequence ID" value="CAJ81657.1"/>
    <property type="molecule type" value="mRNA"/>
</dbReference>
<dbReference type="SMR" id="Q1ELU2"/>
<dbReference type="ArachnoServer" id="AS000053">
    <property type="toxin name" value="M-zodatoxin-Lt3b"/>
</dbReference>
<dbReference type="GO" id="GO:0005576">
    <property type="term" value="C:extracellular region"/>
    <property type="evidence" value="ECO:0007669"/>
    <property type="project" value="UniProtKB-SubCell"/>
</dbReference>
<dbReference type="GO" id="GO:0090729">
    <property type="term" value="F:toxin activity"/>
    <property type="evidence" value="ECO:0007669"/>
    <property type="project" value="UniProtKB-KW"/>
</dbReference>
<dbReference type="GO" id="GO:0042742">
    <property type="term" value="P:defense response to bacterium"/>
    <property type="evidence" value="ECO:0007669"/>
    <property type="project" value="UniProtKB-KW"/>
</dbReference>
<dbReference type="GO" id="GO:0050832">
    <property type="term" value="P:defense response to fungus"/>
    <property type="evidence" value="ECO:0007669"/>
    <property type="project" value="UniProtKB-KW"/>
</dbReference>
<dbReference type="GO" id="GO:0031640">
    <property type="term" value="P:killing of cells of another organism"/>
    <property type="evidence" value="ECO:0007669"/>
    <property type="project" value="UniProtKB-KW"/>
</dbReference>
<dbReference type="InterPro" id="IPR018802">
    <property type="entry name" value="Latarcin_precursor"/>
</dbReference>
<dbReference type="Pfam" id="PF10279">
    <property type="entry name" value="Latarcin"/>
    <property type="match status" value="1"/>
</dbReference>
<reference key="1">
    <citation type="journal article" date="2006" name="J. Biol. Chem.">
        <title>Latarcins, antimicrobial and cytolytic peptides from the venom of the spider Lachesana tarabaevi (Zodariidae) that exemplify biomolecular diversity.</title>
        <authorList>
            <person name="Kozlov S.A."/>
            <person name="Vassilevski A.A."/>
            <person name="Feofanov A.V."/>
            <person name="Surovoy A.Y."/>
            <person name="Karpunin D.V."/>
            <person name="Grishin E.V."/>
        </authorList>
    </citation>
    <scope>NUCLEOTIDE SEQUENCE [MRNA]</scope>
    <scope>PROTEIN SEQUENCE OF 62-81</scope>
    <scope>SYNTHESIS OF 62-81</scope>
    <scope>AMIDATION AT ALA-81</scope>
    <scope>FUNCTION</scope>
    <scope>SUBCELLULAR LOCATION</scope>
    <scope>DOMAIN</scope>
    <scope>MASS SPECTROMETRY</scope>
    <source>
        <tissue>Venom</tissue>
        <tissue>Venom gland</tissue>
    </source>
</reference>
<reference key="2">
    <citation type="journal article" date="2016" name="Biochem. J.">
        <title>Lachesana tarabaevi, an expert in membrane-active toxins.</title>
        <authorList>
            <person name="Kuzmenkov A.I."/>
            <person name="Sachkova M.Y."/>
            <person name="Kovalchuk S.I."/>
            <person name="Grishin E.V."/>
            <person name="Vassilevski A.A."/>
        </authorList>
    </citation>
    <scope>SUBCELLULAR LOCATION</scope>
    <scope>PQM MOTIF</scope>
    <scope>MASS SPECTROMETRY</scope>
    <scope>AMIDATION AT ALA-81</scope>
    <source>
        <tissue>Venom</tissue>
    </source>
</reference>
<accession>Q1ELU2</accession>
<keyword id="KW-0027">Amidation</keyword>
<keyword id="KW-0044">Antibiotic</keyword>
<keyword id="KW-0929">Antimicrobial</keyword>
<keyword id="KW-0903">Direct protein sequencing</keyword>
<keyword id="KW-0295">Fungicide</keyword>
<keyword id="KW-0964">Secreted</keyword>
<keyword id="KW-0732">Signal</keyword>
<keyword id="KW-0800">Toxin</keyword>
<sequence length="82" mass="9360">MKTYAVLLALVVAFVCIAESTGYPVEDLEDDELTELEAEALLEDLLEDLELEDLDYNEEARSWASMAKKLKEYMEKLKQRAG</sequence>